<organism>
    <name type="scientific">Eremothecium gossypii (strain ATCC 10895 / CBS 109.51 / FGSC 9923 / NRRL Y-1056)</name>
    <name type="common">Yeast</name>
    <name type="synonym">Ashbya gossypii</name>
    <dbReference type="NCBI Taxonomy" id="284811"/>
    <lineage>
        <taxon>Eukaryota</taxon>
        <taxon>Fungi</taxon>
        <taxon>Dikarya</taxon>
        <taxon>Ascomycota</taxon>
        <taxon>Saccharomycotina</taxon>
        <taxon>Saccharomycetes</taxon>
        <taxon>Saccharomycetales</taxon>
        <taxon>Saccharomycetaceae</taxon>
        <taxon>Eremothecium</taxon>
    </lineage>
</organism>
<keyword id="KW-0010">Activator</keyword>
<keyword id="KW-0539">Nucleus</keyword>
<keyword id="KW-1185">Reference proteome</keyword>
<keyword id="KW-0804">Transcription</keyword>
<keyword id="KW-0805">Transcription regulation</keyword>
<feature type="chain" id="PRO_0000303048" description="Mediator of RNA polymerase II transcription subunit 6">
    <location>
        <begin position="1"/>
        <end position="235"/>
    </location>
</feature>
<gene>
    <name type="primary">MED6</name>
    <name type="ordered locus">AAL055C</name>
</gene>
<proteinExistence type="inferred from homology"/>
<reference key="1">
    <citation type="journal article" date="2004" name="Science">
        <title>The Ashbya gossypii genome as a tool for mapping the ancient Saccharomyces cerevisiae genome.</title>
        <authorList>
            <person name="Dietrich F.S."/>
            <person name="Voegeli S."/>
            <person name="Brachat S."/>
            <person name="Lerch A."/>
            <person name="Gates K."/>
            <person name="Steiner S."/>
            <person name="Mohr C."/>
            <person name="Poehlmann R."/>
            <person name="Luedi P."/>
            <person name="Choi S."/>
            <person name="Wing R.A."/>
            <person name="Flavier A."/>
            <person name="Gaffney T.D."/>
            <person name="Philippsen P."/>
        </authorList>
    </citation>
    <scope>NUCLEOTIDE SEQUENCE [LARGE SCALE GENOMIC DNA]</scope>
    <source>
        <strain>ATCC 10895 / CBS 109.51 / FGSC 9923 / NRRL Y-1056</strain>
    </source>
</reference>
<reference key="2">
    <citation type="journal article" date="2013" name="G3 (Bethesda)">
        <title>Genomes of Ashbya fungi isolated from insects reveal four mating-type loci, numerous translocations, lack of transposons, and distinct gene duplications.</title>
        <authorList>
            <person name="Dietrich F.S."/>
            <person name="Voegeli S."/>
            <person name="Kuo S."/>
            <person name="Philippsen P."/>
        </authorList>
    </citation>
    <scope>GENOME REANNOTATION</scope>
    <source>
        <strain>ATCC 10895 / CBS 109.51 / FGSC 9923 / NRRL Y-1056</strain>
    </source>
</reference>
<sequence>MSQPPLDELQWKSPEWIQSFGLRTDNVLDYFSQSPFFDKTSNNHVVKMQQQFSQQMPPAPQTARPKAAPSAERQAIWDRYPAYALLEQELAKLKGIEYVLAHVREPDFWVVRKQRRAGDRVTALNDYYIIGANVYQAPTAYSVVQNRLLSTGFHLSAALGAIQRLARFQPGQGAAFVPVEQNSVQPASGTTASSATAPALTAALDGATAGYSDVLTPEMMDRLMLQSLKSTPLYL</sequence>
<comment type="function">
    <text evidence="1">Component of the Mediator complex, a coactivator involved in the regulated transcription of nearly all RNA polymerase II-dependent genes. Mediator functions as a bridge to convey information from gene-specific regulatory proteins to the basal RNA polymerase II transcription machinery. Mediator is recruited to promoters by direct interactions with regulatory proteins and serves as a scaffold for the assembly of a functional preinitiation complex with RNA polymerase II and the general transcription factors (By similarity).</text>
</comment>
<comment type="subunit">
    <text evidence="1">Component of the Mediator complex.</text>
</comment>
<comment type="subcellular location">
    <subcellularLocation>
        <location evidence="1">Nucleus</location>
    </subcellularLocation>
</comment>
<comment type="similarity">
    <text evidence="2">Belongs to the Mediator complex subunit 6 family.</text>
</comment>
<accession>Q75EY3</accession>
<evidence type="ECO:0000250" key="1"/>
<evidence type="ECO:0000305" key="2"/>
<dbReference type="EMBL" id="AE016814">
    <property type="protein sequence ID" value="AAS50311.1"/>
    <property type="molecule type" value="Genomic_DNA"/>
</dbReference>
<dbReference type="RefSeq" id="NP_982487.1">
    <property type="nucleotide sequence ID" value="NM_207840.1"/>
</dbReference>
<dbReference type="SMR" id="Q75EY3"/>
<dbReference type="FunCoup" id="Q75EY3">
    <property type="interactions" value="892"/>
</dbReference>
<dbReference type="STRING" id="284811.Q75EY3"/>
<dbReference type="EnsemblFungi" id="AAS50311">
    <property type="protein sequence ID" value="AAS50311"/>
    <property type="gene ID" value="AGOS_AAL055C"/>
</dbReference>
<dbReference type="GeneID" id="4618481"/>
<dbReference type="KEGG" id="ago:AGOS_AAL055C"/>
<dbReference type="eggNOG" id="KOG3169">
    <property type="taxonomic scope" value="Eukaryota"/>
</dbReference>
<dbReference type="HOGENOM" id="CLU_077754_0_0_1"/>
<dbReference type="InParanoid" id="Q75EY3"/>
<dbReference type="OMA" id="ERPPFLW"/>
<dbReference type="OrthoDB" id="344220at2759"/>
<dbReference type="Proteomes" id="UP000000591">
    <property type="component" value="Chromosome I"/>
</dbReference>
<dbReference type="GO" id="GO:0070847">
    <property type="term" value="C:core mediator complex"/>
    <property type="evidence" value="ECO:0000318"/>
    <property type="project" value="GO_Central"/>
</dbReference>
<dbReference type="GO" id="GO:0016592">
    <property type="term" value="C:mediator complex"/>
    <property type="evidence" value="ECO:0000318"/>
    <property type="project" value="GO_Central"/>
</dbReference>
<dbReference type="GO" id="GO:0003713">
    <property type="term" value="F:transcription coactivator activity"/>
    <property type="evidence" value="ECO:0000318"/>
    <property type="project" value="GO_Central"/>
</dbReference>
<dbReference type="GO" id="GO:0006357">
    <property type="term" value="P:regulation of transcription by RNA polymerase II"/>
    <property type="evidence" value="ECO:0000318"/>
    <property type="project" value="GO_Central"/>
</dbReference>
<dbReference type="FunFam" id="3.10.450.580:FF:000004">
    <property type="entry name" value="Mediator of RNA polymerase II transcription subunit 6"/>
    <property type="match status" value="1"/>
</dbReference>
<dbReference type="Gene3D" id="3.10.450.580">
    <property type="entry name" value="Mediator complex, subunit Med6"/>
    <property type="match status" value="1"/>
</dbReference>
<dbReference type="InterPro" id="IPR007018">
    <property type="entry name" value="Mediator_Med6"/>
</dbReference>
<dbReference type="InterPro" id="IPR016612">
    <property type="entry name" value="Mediator_Med6_fun"/>
</dbReference>
<dbReference type="InterPro" id="IPR038566">
    <property type="entry name" value="Mediator_Med6_sf"/>
</dbReference>
<dbReference type="PANTHER" id="PTHR13104">
    <property type="entry name" value="MED-6-RELATED"/>
    <property type="match status" value="1"/>
</dbReference>
<dbReference type="Pfam" id="PF04934">
    <property type="entry name" value="Med6"/>
    <property type="match status" value="1"/>
</dbReference>
<dbReference type="PIRSF" id="PIRSF013286">
    <property type="entry name" value="MED6_fungi"/>
    <property type="match status" value="1"/>
</dbReference>
<name>MED6_EREGS</name>
<protein>
    <recommendedName>
        <fullName>Mediator of RNA polymerase II transcription subunit 6</fullName>
    </recommendedName>
    <alternativeName>
        <fullName>Mediator complex subunit 6</fullName>
    </alternativeName>
</protein>